<sequence length="142" mass="15870">MFQGASALTLDAKGRMSVPSRYREALQGQAEGRVTVTKHPDGCLLLFPRPEWEVFRAKIAALPMDAHWWRRIFLGNAMDVDLDSAGRILVSPELRMAAGLEKEVMLLGMGSHFELWDAQTYTAKEQAAMAQGMPEALKNFTF</sequence>
<reference key="1">
    <citation type="journal article" date="2005" name="BMC Genomics">
        <title>Bacterial genome adaptation to niches: divergence of the potential virulence genes in three Burkholderia species of different survival strategies.</title>
        <authorList>
            <person name="Kim H.S."/>
            <person name="Schell M.A."/>
            <person name="Yu Y."/>
            <person name="Ulrich R.L."/>
            <person name="Sarria S.H."/>
            <person name="Nierman W.C."/>
            <person name="DeShazer D."/>
        </authorList>
    </citation>
    <scope>NUCLEOTIDE SEQUENCE [LARGE SCALE GENOMIC DNA]</scope>
    <source>
        <strain>ATCC 700388 / DSM 13276 / CCUG 48851 / CIP 106301 / E264</strain>
    </source>
</reference>
<dbReference type="EMBL" id="CP000086">
    <property type="protein sequence ID" value="ABC38745.1"/>
    <property type="molecule type" value="Genomic_DNA"/>
</dbReference>
<dbReference type="RefSeq" id="WP_004194130.1">
    <property type="nucleotide sequence ID" value="NZ_CP008785.1"/>
</dbReference>
<dbReference type="SMR" id="Q2SZJ2"/>
<dbReference type="GeneID" id="93061636"/>
<dbReference type="KEGG" id="bte:BTH_I1109"/>
<dbReference type="HOGENOM" id="CLU_107907_2_1_4"/>
<dbReference type="Proteomes" id="UP000001930">
    <property type="component" value="Chromosome I"/>
</dbReference>
<dbReference type="GO" id="GO:0005737">
    <property type="term" value="C:cytoplasm"/>
    <property type="evidence" value="ECO:0007669"/>
    <property type="project" value="UniProtKB-UniRule"/>
</dbReference>
<dbReference type="GO" id="GO:0009295">
    <property type="term" value="C:nucleoid"/>
    <property type="evidence" value="ECO:0007669"/>
    <property type="project" value="UniProtKB-SubCell"/>
</dbReference>
<dbReference type="GO" id="GO:0003700">
    <property type="term" value="F:DNA-binding transcription factor activity"/>
    <property type="evidence" value="ECO:0007669"/>
    <property type="project" value="UniProtKB-UniRule"/>
</dbReference>
<dbReference type="GO" id="GO:0000976">
    <property type="term" value="F:transcription cis-regulatory region binding"/>
    <property type="evidence" value="ECO:0007669"/>
    <property type="project" value="TreeGrafter"/>
</dbReference>
<dbReference type="GO" id="GO:2000143">
    <property type="term" value="P:negative regulation of DNA-templated transcription initiation"/>
    <property type="evidence" value="ECO:0007669"/>
    <property type="project" value="TreeGrafter"/>
</dbReference>
<dbReference type="CDD" id="cd16321">
    <property type="entry name" value="MraZ_C"/>
    <property type="match status" value="1"/>
</dbReference>
<dbReference type="CDD" id="cd16320">
    <property type="entry name" value="MraZ_N"/>
    <property type="match status" value="1"/>
</dbReference>
<dbReference type="Gene3D" id="3.40.1550.20">
    <property type="entry name" value="Transcriptional regulator MraZ domain"/>
    <property type="match status" value="1"/>
</dbReference>
<dbReference type="HAMAP" id="MF_01008">
    <property type="entry name" value="MraZ"/>
    <property type="match status" value="1"/>
</dbReference>
<dbReference type="InterPro" id="IPR003444">
    <property type="entry name" value="MraZ"/>
</dbReference>
<dbReference type="InterPro" id="IPR035644">
    <property type="entry name" value="MraZ_C"/>
</dbReference>
<dbReference type="InterPro" id="IPR020603">
    <property type="entry name" value="MraZ_dom"/>
</dbReference>
<dbReference type="InterPro" id="IPR035642">
    <property type="entry name" value="MraZ_N"/>
</dbReference>
<dbReference type="InterPro" id="IPR038619">
    <property type="entry name" value="MraZ_sf"/>
</dbReference>
<dbReference type="InterPro" id="IPR007159">
    <property type="entry name" value="SpoVT-AbrB_dom"/>
</dbReference>
<dbReference type="InterPro" id="IPR037914">
    <property type="entry name" value="SpoVT-AbrB_sf"/>
</dbReference>
<dbReference type="NCBIfam" id="TIGR00242">
    <property type="entry name" value="division/cell wall cluster transcriptional repressor MraZ"/>
    <property type="match status" value="1"/>
</dbReference>
<dbReference type="PANTHER" id="PTHR34701">
    <property type="entry name" value="TRANSCRIPTIONAL REGULATOR MRAZ"/>
    <property type="match status" value="1"/>
</dbReference>
<dbReference type="PANTHER" id="PTHR34701:SF1">
    <property type="entry name" value="TRANSCRIPTIONAL REGULATOR MRAZ"/>
    <property type="match status" value="1"/>
</dbReference>
<dbReference type="Pfam" id="PF02381">
    <property type="entry name" value="MraZ"/>
    <property type="match status" value="2"/>
</dbReference>
<dbReference type="SUPFAM" id="SSF89447">
    <property type="entry name" value="AbrB/MazE/MraZ-like"/>
    <property type="match status" value="1"/>
</dbReference>
<dbReference type="PROSITE" id="PS51740">
    <property type="entry name" value="SPOVT_ABRB"/>
    <property type="match status" value="2"/>
</dbReference>
<gene>
    <name evidence="1" type="primary">mraZ</name>
    <name type="ordered locus">BTH_I1109</name>
</gene>
<keyword id="KW-0963">Cytoplasm</keyword>
<keyword id="KW-0238">DNA-binding</keyword>
<keyword id="KW-0677">Repeat</keyword>
<keyword id="KW-0804">Transcription</keyword>
<keyword id="KW-0805">Transcription regulation</keyword>
<feature type="chain" id="PRO_1000062858" description="Transcriptional regulator MraZ">
    <location>
        <begin position="1"/>
        <end position="142"/>
    </location>
</feature>
<feature type="domain" description="SpoVT-AbrB 1" evidence="2">
    <location>
        <begin position="5"/>
        <end position="51"/>
    </location>
</feature>
<feature type="domain" description="SpoVT-AbrB 2" evidence="2">
    <location>
        <begin position="77"/>
        <end position="120"/>
    </location>
</feature>
<organism>
    <name type="scientific">Burkholderia thailandensis (strain ATCC 700388 / DSM 13276 / CCUG 48851 / CIP 106301 / E264)</name>
    <dbReference type="NCBI Taxonomy" id="271848"/>
    <lineage>
        <taxon>Bacteria</taxon>
        <taxon>Pseudomonadati</taxon>
        <taxon>Pseudomonadota</taxon>
        <taxon>Betaproteobacteria</taxon>
        <taxon>Burkholderiales</taxon>
        <taxon>Burkholderiaceae</taxon>
        <taxon>Burkholderia</taxon>
        <taxon>pseudomallei group</taxon>
    </lineage>
</organism>
<name>MRAZ_BURTA</name>
<accession>Q2SZJ2</accession>
<comment type="subunit">
    <text evidence="1">Forms oligomers.</text>
</comment>
<comment type="subcellular location">
    <subcellularLocation>
        <location evidence="1">Cytoplasm</location>
        <location evidence="1">Nucleoid</location>
    </subcellularLocation>
</comment>
<comment type="similarity">
    <text evidence="1">Belongs to the MraZ family.</text>
</comment>
<protein>
    <recommendedName>
        <fullName>Transcriptional regulator MraZ</fullName>
    </recommendedName>
</protein>
<proteinExistence type="inferred from homology"/>
<evidence type="ECO:0000255" key="1">
    <source>
        <dbReference type="HAMAP-Rule" id="MF_01008"/>
    </source>
</evidence>
<evidence type="ECO:0000255" key="2">
    <source>
        <dbReference type="PROSITE-ProRule" id="PRU01076"/>
    </source>
</evidence>